<dbReference type="EC" id="1.4.3.5" evidence="1"/>
<dbReference type="EMBL" id="BX248583">
    <property type="protein sequence ID" value="CAD83436.1"/>
    <property type="molecule type" value="Genomic_DNA"/>
</dbReference>
<dbReference type="SMR" id="Q7VR53"/>
<dbReference type="STRING" id="203907.Bfl370"/>
<dbReference type="KEGG" id="bfl:Bfl370"/>
<dbReference type="eggNOG" id="COG0259">
    <property type="taxonomic scope" value="Bacteria"/>
</dbReference>
<dbReference type="HOGENOM" id="CLU_032263_2_2_6"/>
<dbReference type="UniPathway" id="UPA01068">
    <property type="reaction ID" value="UER00304"/>
</dbReference>
<dbReference type="UniPathway" id="UPA01068">
    <property type="reaction ID" value="UER00305"/>
</dbReference>
<dbReference type="Proteomes" id="UP000002192">
    <property type="component" value="Chromosome"/>
</dbReference>
<dbReference type="GO" id="GO:0010181">
    <property type="term" value="F:FMN binding"/>
    <property type="evidence" value="ECO:0007669"/>
    <property type="project" value="UniProtKB-UniRule"/>
</dbReference>
<dbReference type="GO" id="GO:0004733">
    <property type="term" value="F:pyridoxamine phosphate oxidase activity"/>
    <property type="evidence" value="ECO:0007669"/>
    <property type="project" value="UniProtKB-UniRule"/>
</dbReference>
<dbReference type="GO" id="GO:0008615">
    <property type="term" value="P:pyridoxine biosynthetic process"/>
    <property type="evidence" value="ECO:0007669"/>
    <property type="project" value="UniProtKB-KW"/>
</dbReference>
<dbReference type="Gene3D" id="2.30.110.10">
    <property type="entry name" value="Electron Transport, Fmn-binding Protein, Chain A"/>
    <property type="match status" value="1"/>
</dbReference>
<dbReference type="HAMAP" id="MF_01629">
    <property type="entry name" value="PdxH"/>
    <property type="match status" value="1"/>
</dbReference>
<dbReference type="InterPro" id="IPR000659">
    <property type="entry name" value="Pyridox_Oxase"/>
</dbReference>
<dbReference type="InterPro" id="IPR019740">
    <property type="entry name" value="Pyridox_Oxase_CS"/>
</dbReference>
<dbReference type="InterPro" id="IPR011576">
    <property type="entry name" value="Pyridox_Oxase_N"/>
</dbReference>
<dbReference type="InterPro" id="IPR019576">
    <property type="entry name" value="Pyridoxamine_oxidase_dimer_C"/>
</dbReference>
<dbReference type="InterPro" id="IPR012349">
    <property type="entry name" value="Split_barrel_FMN-bd"/>
</dbReference>
<dbReference type="NCBIfam" id="TIGR00558">
    <property type="entry name" value="pdxH"/>
    <property type="match status" value="1"/>
</dbReference>
<dbReference type="NCBIfam" id="NF004231">
    <property type="entry name" value="PRK05679.1"/>
    <property type="match status" value="1"/>
</dbReference>
<dbReference type="PANTHER" id="PTHR10851:SF0">
    <property type="entry name" value="PYRIDOXINE-5'-PHOSPHATE OXIDASE"/>
    <property type="match status" value="1"/>
</dbReference>
<dbReference type="PANTHER" id="PTHR10851">
    <property type="entry name" value="PYRIDOXINE-5-PHOSPHATE OXIDASE"/>
    <property type="match status" value="1"/>
</dbReference>
<dbReference type="Pfam" id="PF10590">
    <property type="entry name" value="PNP_phzG_C"/>
    <property type="match status" value="1"/>
</dbReference>
<dbReference type="Pfam" id="PF01243">
    <property type="entry name" value="PNPOx_N"/>
    <property type="match status" value="1"/>
</dbReference>
<dbReference type="PIRSF" id="PIRSF000190">
    <property type="entry name" value="Pyd_amn-ph_oxd"/>
    <property type="match status" value="1"/>
</dbReference>
<dbReference type="SUPFAM" id="SSF50475">
    <property type="entry name" value="FMN-binding split barrel"/>
    <property type="match status" value="1"/>
</dbReference>
<dbReference type="PROSITE" id="PS01064">
    <property type="entry name" value="PYRIDOX_OXIDASE"/>
    <property type="match status" value="1"/>
</dbReference>
<organism>
    <name type="scientific">Blochmanniella floridana</name>
    <dbReference type="NCBI Taxonomy" id="203907"/>
    <lineage>
        <taxon>Bacteria</taxon>
        <taxon>Pseudomonadati</taxon>
        <taxon>Pseudomonadota</taxon>
        <taxon>Gammaproteobacteria</taxon>
        <taxon>Enterobacterales</taxon>
        <taxon>Enterobacteriaceae</taxon>
        <taxon>ant endosymbionts</taxon>
        <taxon>Candidatus Blochmanniella</taxon>
    </lineage>
</organism>
<sequence>MLELSKIHNLRREYISKQFRRSNLTKNPMHLFSKWLYEAYCQIPDPNAMCLSTVDHTGQPFQRLVLLKYFNDKTIVFFTHLNSRKAIHINNNPKISLCFPWNIINRQIIITGSVYKISKKEAQKYFYTRPKNNQISTWASKQSTIISSKKVLKNKFLKLKKKYFQKSVPFPHFWVGYKININSMEFWQGGIYRLHDRFLYKKNKKKWYINRLSP</sequence>
<reference key="1">
    <citation type="journal article" date="2003" name="Proc. Natl. Acad. Sci. U.S.A.">
        <title>The genome sequence of Blochmannia floridanus: comparative analysis of reduced genomes.</title>
        <authorList>
            <person name="Gil R."/>
            <person name="Silva F.J."/>
            <person name="Zientz E."/>
            <person name="Delmotte F."/>
            <person name="Gonzalez-Candelas F."/>
            <person name="Latorre A."/>
            <person name="Rausell C."/>
            <person name="Kamerbeek J."/>
            <person name="Gadau J."/>
            <person name="Hoelldobler B."/>
            <person name="van Ham R.C.H.J."/>
            <person name="Gross R."/>
            <person name="Moya A."/>
        </authorList>
    </citation>
    <scope>NUCLEOTIDE SEQUENCE [LARGE SCALE GENOMIC DNA]</scope>
</reference>
<comment type="function">
    <text evidence="1">Catalyzes the oxidation of either pyridoxine 5'-phosphate (PNP) or pyridoxamine 5'-phosphate (PMP) into pyridoxal 5'-phosphate (PLP).</text>
</comment>
<comment type="catalytic activity">
    <reaction evidence="1">
        <text>pyridoxamine 5'-phosphate + O2 + H2O = pyridoxal 5'-phosphate + H2O2 + NH4(+)</text>
        <dbReference type="Rhea" id="RHEA:15817"/>
        <dbReference type="ChEBI" id="CHEBI:15377"/>
        <dbReference type="ChEBI" id="CHEBI:15379"/>
        <dbReference type="ChEBI" id="CHEBI:16240"/>
        <dbReference type="ChEBI" id="CHEBI:28938"/>
        <dbReference type="ChEBI" id="CHEBI:58451"/>
        <dbReference type="ChEBI" id="CHEBI:597326"/>
        <dbReference type="EC" id="1.4.3.5"/>
    </reaction>
</comment>
<comment type="catalytic activity">
    <reaction evidence="1">
        <text>pyridoxine 5'-phosphate + O2 = pyridoxal 5'-phosphate + H2O2</text>
        <dbReference type="Rhea" id="RHEA:15149"/>
        <dbReference type="ChEBI" id="CHEBI:15379"/>
        <dbReference type="ChEBI" id="CHEBI:16240"/>
        <dbReference type="ChEBI" id="CHEBI:58589"/>
        <dbReference type="ChEBI" id="CHEBI:597326"/>
        <dbReference type="EC" id="1.4.3.5"/>
    </reaction>
</comment>
<comment type="cofactor">
    <cofactor evidence="1">
        <name>FMN</name>
        <dbReference type="ChEBI" id="CHEBI:58210"/>
    </cofactor>
    <text evidence="1">Binds 1 FMN per subunit.</text>
</comment>
<comment type="pathway">
    <text evidence="1">Cofactor metabolism; pyridoxal 5'-phosphate salvage; pyridoxal 5'-phosphate from pyridoxamine 5'-phosphate: step 1/1.</text>
</comment>
<comment type="pathway">
    <text evidence="1">Cofactor metabolism; pyridoxal 5'-phosphate salvage; pyridoxal 5'-phosphate from pyridoxine 5'-phosphate: step 1/1.</text>
</comment>
<comment type="subunit">
    <text evidence="1">Homodimer.</text>
</comment>
<comment type="similarity">
    <text evidence="1">Belongs to the pyridoxamine 5'-phosphate oxidase family.</text>
</comment>
<protein>
    <recommendedName>
        <fullName evidence="1">Pyridoxine/pyridoxamine 5'-phosphate oxidase</fullName>
        <ecNumber evidence="1">1.4.3.5</ecNumber>
    </recommendedName>
    <alternativeName>
        <fullName evidence="1">PNP/PMP oxidase</fullName>
        <shortName evidence="1">PNPOx</shortName>
    </alternativeName>
    <alternativeName>
        <fullName evidence="1">Pyridoxal 5'-phosphate synthase</fullName>
    </alternativeName>
</protein>
<proteinExistence type="inferred from homology"/>
<gene>
    <name evidence="1" type="primary">pdxH</name>
    <name type="ordered locus">Bfl370</name>
</gene>
<accession>Q7VR53</accession>
<evidence type="ECO:0000255" key="1">
    <source>
        <dbReference type="HAMAP-Rule" id="MF_01629"/>
    </source>
</evidence>
<keyword id="KW-0285">Flavoprotein</keyword>
<keyword id="KW-0288">FMN</keyword>
<keyword id="KW-0560">Oxidoreductase</keyword>
<keyword id="KW-0664">Pyridoxine biosynthesis</keyword>
<keyword id="KW-1185">Reference proteome</keyword>
<name>PDXH_BLOFL</name>
<feature type="chain" id="PRO_0000167687" description="Pyridoxine/pyridoxamine 5'-phosphate oxidase">
    <location>
        <begin position="1"/>
        <end position="214"/>
    </location>
</feature>
<feature type="binding site" evidence="1">
    <location>
        <begin position="11"/>
        <end position="14"/>
    </location>
    <ligand>
        <name>substrate</name>
    </ligand>
</feature>
<feature type="binding site" evidence="1">
    <location>
        <begin position="63"/>
        <end position="68"/>
    </location>
    <ligand>
        <name>FMN</name>
        <dbReference type="ChEBI" id="CHEBI:58210"/>
    </ligand>
</feature>
<feature type="binding site" evidence="1">
    <location>
        <position position="68"/>
    </location>
    <ligand>
        <name>substrate</name>
    </ligand>
</feature>
<feature type="binding site" evidence="1">
    <location>
        <begin position="78"/>
        <end position="79"/>
    </location>
    <ligand>
        <name>FMN</name>
        <dbReference type="ChEBI" id="CHEBI:58210"/>
    </ligand>
</feature>
<feature type="binding site" evidence="1">
    <location>
        <position position="84"/>
    </location>
    <ligand>
        <name>FMN</name>
        <dbReference type="ChEBI" id="CHEBI:58210"/>
    </ligand>
</feature>
<feature type="binding site" evidence="1">
    <location>
        <position position="85"/>
    </location>
    <ligand>
        <name>FMN</name>
        <dbReference type="ChEBI" id="CHEBI:58210"/>
    </ligand>
</feature>
<feature type="binding site" evidence="1">
    <location>
        <position position="107"/>
    </location>
    <ligand>
        <name>FMN</name>
        <dbReference type="ChEBI" id="CHEBI:58210"/>
    </ligand>
</feature>
<feature type="binding site" evidence="1">
    <location>
        <position position="125"/>
    </location>
    <ligand>
        <name>substrate</name>
    </ligand>
</feature>
<feature type="binding site" evidence="1">
    <location>
        <position position="129"/>
    </location>
    <ligand>
        <name>substrate</name>
    </ligand>
</feature>
<feature type="binding site" evidence="1">
    <location>
        <begin position="142"/>
        <end position="143"/>
    </location>
    <ligand>
        <name>FMN</name>
        <dbReference type="ChEBI" id="CHEBI:58210"/>
    </ligand>
</feature>
<feature type="binding site" evidence="1">
    <location>
        <position position="187"/>
    </location>
    <ligand>
        <name>FMN</name>
        <dbReference type="ChEBI" id="CHEBI:58210"/>
    </ligand>
</feature>
<feature type="binding site" evidence="1">
    <location>
        <begin position="193"/>
        <end position="195"/>
    </location>
    <ligand>
        <name>substrate</name>
    </ligand>
</feature>
<feature type="binding site" evidence="1">
    <location>
        <position position="197"/>
    </location>
    <ligand>
        <name>FMN</name>
        <dbReference type="ChEBI" id="CHEBI:58210"/>
    </ligand>
</feature>